<protein>
    <recommendedName>
        <fullName evidence="1">NAD(P)H-quinone oxidoreductase subunit J, chloroplastic</fullName>
        <ecNumber evidence="1">7.1.1.-</ecNumber>
    </recommendedName>
    <alternativeName>
        <fullName>NAD(P)H dehydrogenase subunit J</fullName>
    </alternativeName>
    <alternativeName>
        <fullName evidence="1">NADH-plastoquinone oxidoreductase subunit J</fullName>
    </alternativeName>
</protein>
<evidence type="ECO:0000255" key="1">
    <source>
        <dbReference type="HAMAP-Rule" id="MF_01357"/>
    </source>
</evidence>
<accession>A1XGP1</accession>
<proteinExistence type="inferred from homology"/>
<name>NDHJ_RANMC</name>
<organism>
    <name type="scientific">Ranunculus macranthus</name>
    <name type="common">Large buttercup</name>
    <dbReference type="NCBI Taxonomy" id="334596"/>
    <lineage>
        <taxon>Eukaryota</taxon>
        <taxon>Viridiplantae</taxon>
        <taxon>Streptophyta</taxon>
        <taxon>Embryophyta</taxon>
        <taxon>Tracheophyta</taxon>
        <taxon>Spermatophyta</taxon>
        <taxon>Magnoliopsida</taxon>
        <taxon>Ranunculales</taxon>
        <taxon>Ranunculaceae</taxon>
        <taxon>Ranunculoideae</taxon>
        <taxon>Ranunculeae</taxon>
        <taxon>Ranunculus</taxon>
    </lineage>
</organism>
<keyword id="KW-0150">Chloroplast</keyword>
<keyword id="KW-0472">Membrane</keyword>
<keyword id="KW-0520">NAD</keyword>
<keyword id="KW-0521">NADP</keyword>
<keyword id="KW-0934">Plastid</keyword>
<keyword id="KW-0618">Plastoquinone</keyword>
<keyword id="KW-0874">Quinone</keyword>
<keyword id="KW-0793">Thylakoid</keyword>
<keyword id="KW-1278">Translocase</keyword>
<keyword id="KW-0813">Transport</keyword>
<dbReference type="EC" id="7.1.1.-" evidence="1"/>
<dbReference type="EMBL" id="DQ359689">
    <property type="protein sequence ID" value="ABC70759.1"/>
    <property type="molecule type" value="Genomic_DNA"/>
</dbReference>
<dbReference type="RefSeq" id="YP_001004189.1">
    <property type="nucleotide sequence ID" value="NC_008796.1"/>
</dbReference>
<dbReference type="SMR" id="A1XGP1"/>
<dbReference type="GeneID" id="4712159"/>
<dbReference type="GO" id="GO:0009535">
    <property type="term" value="C:chloroplast thylakoid membrane"/>
    <property type="evidence" value="ECO:0007669"/>
    <property type="project" value="UniProtKB-SubCell"/>
</dbReference>
<dbReference type="GO" id="GO:0008137">
    <property type="term" value="F:NADH dehydrogenase (ubiquinone) activity"/>
    <property type="evidence" value="ECO:0007669"/>
    <property type="project" value="InterPro"/>
</dbReference>
<dbReference type="GO" id="GO:0048038">
    <property type="term" value="F:quinone binding"/>
    <property type="evidence" value="ECO:0007669"/>
    <property type="project" value="UniProtKB-KW"/>
</dbReference>
<dbReference type="GO" id="GO:0019684">
    <property type="term" value="P:photosynthesis, light reaction"/>
    <property type="evidence" value="ECO:0007669"/>
    <property type="project" value="UniProtKB-UniRule"/>
</dbReference>
<dbReference type="FunFam" id="3.30.460.80:FF:000004">
    <property type="entry name" value="NAD(P)H-quinone oxidoreductase subunit J, chloroplastic"/>
    <property type="match status" value="1"/>
</dbReference>
<dbReference type="Gene3D" id="3.30.460.80">
    <property type="entry name" value="NADH:ubiquinone oxidoreductase, 30kDa subunit"/>
    <property type="match status" value="1"/>
</dbReference>
<dbReference type="HAMAP" id="MF_01357">
    <property type="entry name" value="NDH1_NuoC"/>
    <property type="match status" value="1"/>
</dbReference>
<dbReference type="InterPro" id="IPR010218">
    <property type="entry name" value="NADH_DH_suC"/>
</dbReference>
<dbReference type="InterPro" id="IPR037232">
    <property type="entry name" value="NADH_quin_OxRdtase_su_C/D-like"/>
</dbReference>
<dbReference type="InterPro" id="IPR001268">
    <property type="entry name" value="NADH_UbQ_OxRdtase_30kDa_su"/>
</dbReference>
<dbReference type="InterPro" id="IPR020396">
    <property type="entry name" value="NADH_UbQ_OxRdtase_CS"/>
</dbReference>
<dbReference type="NCBIfam" id="NF009141">
    <property type="entry name" value="PRK12494.1"/>
    <property type="match status" value="1"/>
</dbReference>
<dbReference type="PANTHER" id="PTHR10884:SF14">
    <property type="entry name" value="NADH DEHYDROGENASE [UBIQUINONE] IRON-SULFUR PROTEIN 3, MITOCHONDRIAL"/>
    <property type="match status" value="1"/>
</dbReference>
<dbReference type="PANTHER" id="PTHR10884">
    <property type="entry name" value="NADH DEHYDROGENASE UBIQUINONE IRON-SULFUR PROTEIN 3"/>
    <property type="match status" value="1"/>
</dbReference>
<dbReference type="Pfam" id="PF00329">
    <property type="entry name" value="Complex1_30kDa"/>
    <property type="match status" value="1"/>
</dbReference>
<dbReference type="SUPFAM" id="SSF143243">
    <property type="entry name" value="Nqo5-like"/>
    <property type="match status" value="1"/>
</dbReference>
<dbReference type="PROSITE" id="PS00542">
    <property type="entry name" value="COMPLEX1_30K"/>
    <property type="match status" value="1"/>
</dbReference>
<sequence>MQGRLSAWLAKHRLVHRSLGFDYQGIETLQIKPEDWHSIAVILYVYGYNYLRSQCAYDVAPGGLLASVYHLTRIQYGVDQPEEVCIKVFAPRRNPRIPSVFWIWKSADFQERESYDMLGISYDNHPRLKRILMPESWIGWPLRKDYIAPNFYEIQDAH</sequence>
<reference key="1">
    <citation type="journal article" date="2007" name="BMC Genomics">
        <title>Comparative chloroplast genomics: analyses including new sequences from the angiosperms Nuphar advena and Ranunculus macranthus.</title>
        <authorList>
            <person name="Raubeson L.A."/>
            <person name="Peery R."/>
            <person name="Chumley T.W."/>
            <person name="Dziubek C."/>
            <person name="Fourcade H.M."/>
            <person name="Boore J.L."/>
            <person name="Jansen R.K."/>
        </authorList>
    </citation>
    <scope>NUCLEOTIDE SEQUENCE [LARGE SCALE GENOMIC DNA]</scope>
</reference>
<geneLocation type="chloroplast"/>
<gene>
    <name evidence="1" type="primary">ndhJ</name>
</gene>
<feature type="chain" id="PRO_0000358303" description="NAD(P)H-quinone oxidoreductase subunit J, chloroplastic">
    <location>
        <begin position="1"/>
        <end position="158"/>
    </location>
</feature>
<comment type="function">
    <text evidence="1">NDH shuttles electrons from NAD(P)H:plastoquinone, via FMN and iron-sulfur (Fe-S) centers, to quinones in the photosynthetic chain and possibly in a chloroplast respiratory chain. The immediate electron acceptor for the enzyme in this species is believed to be plastoquinone. Couples the redox reaction to proton translocation, and thus conserves the redox energy in a proton gradient.</text>
</comment>
<comment type="catalytic activity">
    <reaction evidence="1">
        <text>a plastoquinone + NADH + (n+1) H(+)(in) = a plastoquinol + NAD(+) + n H(+)(out)</text>
        <dbReference type="Rhea" id="RHEA:42608"/>
        <dbReference type="Rhea" id="RHEA-COMP:9561"/>
        <dbReference type="Rhea" id="RHEA-COMP:9562"/>
        <dbReference type="ChEBI" id="CHEBI:15378"/>
        <dbReference type="ChEBI" id="CHEBI:17757"/>
        <dbReference type="ChEBI" id="CHEBI:57540"/>
        <dbReference type="ChEBI" id="CHEBI:57945"/>
        <dbReference type="ChEBI" id="CHEBI:62192"/>
    </reaction>
</comment>
<comment type="catalytic activity">
    <reaction evidence="1">
        <text>a plastoquinone + NADPH + (n+1) H(+)(in) = a plastoquinol + NADP(+) + n H(+)(out)</text>
        <dbReference type="Rhea" id="RHEA:42612"/>
        <dbReference type="Rhea" id="RHEA-COMP:9561"/>
        <dbReference type="Rhea" id="RHEA-COMP:9562"/>
        <dbReference type="ChEBI" id="CHEBI:15378"/>
        <dbReference type="ChEBI" id="CHEBI:17757"/>
        <dbReference type="ChEBI" id="CHEBI:57783"/>
        <dbReference type="ChEBI" id="CHEBI:58349"/>
        <dbReference type="ChEBI" id="CHEBI:62192"/>
    </reaction>
</comment>
<comment type="subunit">
    <text evidence="1">NDH is composed of at least 16 different subunits, 5 of which are encoded in the nucleus.</text>
</comment>
<comment type="subcellular location">
    <subcellularLocation>
        <location evidence="1">Plastid</location>
        <location evidence="1">Chloroplast thylakoid membrane</location>
        <topology evidence="1">Peripheral membrane protein</topology>
        <orientation evidence="1">Stromal side</orientation>
    </subcellularLocation>
</comment>
<comment type="similarity">
    <text evidence="1">Belongs to the complex I 30 kDa subunit family.</text>
</comment>